<keyword id="KW-0539">Nucleus</keyword>
<keyword id="KW-1185">Reference proteome</keyword>
<keyword id="KW-0687">Ribonucleoprotein</keyword>
<keyword id="KW-0690">Ribosome biogenesis</keyword>
<keyword id="KW-0698">rRNA processing</keyword>
<sequence>MAPLFILTETAAGLVLFKADKKLLKKDDVASEIETAEGINGLLKLKQFQKFDSAATALEEVASLVEGKVSPMLAKLLDTLKDEKKASLAVADPKLGQAINKLPGLTLTPISDSKTNDIFRGIRDHLPSLIPGLLPEHISTMSLGLSHSLSRHKLKFSPDKVDTMIVQAISLLDDLDKELNTYAMRVKEWYGWHFPEMGKIVNDNLAYARVILKVGMRVNTSSTDLADILPEEIEAAIKAAAEVSMGTEITEEDLDNIKLLAEQVVGFTEYRQQLSSYLSARMQAIAPNLTELVGELVGARLIAHAGSLMNLAKSPASTIQILGAEKALFRALKTKHDTPKYGLIYHASLVGQATGKNKGKIARMLAAKAAIGLRVDALSDWSAQGEGKGDDVDDEERSALGVTSRAKIERHLRGIEGKPLLPRGVAVGPNGKTTSAPGKWEVKEARKYNADADGLAGDEPAAAIPVREKKNKKLIEEVAEKSDSDSSDESDASEKKSKKGDKEAKKAEKAAKKAEKAAKKAAKAAKKAVKEAKEVKKSAVNDTPEVNGKKRKSEDDGEKSEKKKKKKNKD</sequence>
<protein>
    <recommendedName>
        <fullName>Nucleolar protein 58</fullName>
    </recommendedName>
</protein>
<comment type="function">
    <text evidence="1">Required for pre-18S rRNA processing. May bind microtubules (By similarity).</text>
</comment>
<comment type="subcellular location">
    <subcellularLocation>
        <location evidence="1">Nucleus</location>
        <location evidence="1">Nucleolus</location>
    </subcellularLocation>
</comment>
<comment type="similarity">
    <text evidence="4">Belongs to the NOP5/NOP56 family.</text>
</comment>
<evidence type="ECO:0000250" key="1"/>
<evidence type="ECO:0000255" key="2">
    <source>
        <dbReference type="PROSITE-ProRule" id="PRU00690"/>
    </source>
</evidence>
<evidence type="ECO:0000256" key="3">
    <source>
        <dbReference type="SAM" id="MobiDB-lite"/>
    </source>
</evidence>
<evidence type="ECO:0000305" key="4"/>
<proteinExistence type="inferred from homology"/>
<accession>A7F2R6</accession>
<gene>
    <name type="primary">NOP58</name>
    <name type="ORF">SS1G_12214</name>
</gene>
<organism>
    <name type="scientific">Sclerotinia sclerotiorum (strain ATCC 18683 / 1980 / Ss-1)</name>
    <name type="common">White mold</name>
    <name type="synonym">Whetzelinia sclerotiorum</name>
    <dbReference type="NCBI Taxonomy" id="665079"/>
    <lineage>
        <taxon>Eukaryota</taxon>
        <taxon>Fungi</taxon>
        <taxon>Dikarya</taxon>
        <taxon>Ascomycota</taxon>
        <taxon>Pezizomycotina</taxon>
        <taxon>Leotiomycetes</taxon>
        <taxon>Helotiales</taxon>
        <taxon>Sclerotiniaceae</taxon>
        <taxon>Sclerotinia</taxon>
    </lineage>
</organism>
<feature type="chain" id="PRO_0000350992" description="Nucleolar protein 58">
    <location>
        <begin position="1"/>
        <end position="570"/>
    </location>
</feature>
<feature type="domain" description="Nop" evidence="2">
    <location>
        <begin position="285"/>
        <end position="417"/>
    </location>
</feature>
<feature type="region of interest" description="Disordered" evidence="3">
    <location>
        <begin position="451"/>
        <end position="470"/>
    </location>
</feature>
<feature type="region of interest" description="Disordered" evidence="3">
    <location>
        <begin position="475"/>
        <end position="570"/>
    </location>
</feature>
<feature type="compositionally biased region" description="Basic and acidic residues" evidence="3">
    <location>
        <begin position="475"/>
        <end position="484"/>
    </location>
</feature>
<feature type="compositionally biased region" description="Basic and acidic residues" evidence="3">
    <location>
        <begin position="492"/>
        <end position="518"/>
    </location>
</feature>
<feature type="compositionally biased region" description="Basic and acidic residues" evidence="3">
    <location>
        <begin position="528"/>
        <end position="539"/>
    </location>
</feature>
<reference key="1">
    <citation type="journal article" date="2011" name="PLoS Genet.">
        <title>Genomic analysis of the necrotrophic fungal pathogens Sclerotinia sclerotiorum and Botrytis cinerea.</title>
        <authorList>
            <person name="Amselem J."/>
            <person name="Cuomo C.A."/>
            <person name="van Kan J.A.L."/>
            <person name="Viaud M."/>
            <person name="Benito E.P."/>
            <person name="Couloux A."/>
            <person name="Coutinho P.M."/>
            <person name="de Vries R.P."/>
            <person name="Dyer P.S."/>
            <person name="Fillinger S."/>
            <person name="Fournier E."/>
            <person name="Gout L."/>
            <person name="Hahn M."/>
            <person name="Kohn L."/>
            <person name="Lapalu N."/>
            <person name="Plummer K.M."/>
            <person name="Pradier J.-M."/>
            <person name="Quevillon E."/>
            <person name="Sharon A."/>
            <person name="Simon A."/>
            <person name="ten Have A."/>
            <person name="Tudzynski B."/>
            <person name="Tudzynski P."/>
            <person name="Wincker P."/>
            <person name="Andrew M."/>
            <person name="Anthouard V."/>
            <person name="Beever R.E."/>
            <person name="Beffa R."/>
            <person name="Benoit I."/>
            <person name="Bouzid O."/>
            <person name="Brault B."/>
            <person name="Chen Z."/>
            <person name="Choquer M."/>
            <person name="Collemare J."/>
            <person name="Cotton P."/>
            <person name="Danchin E.G."/>
            <person name="Da Silva C."/>
            <person name="Gautier A."/>
            <person name="Giraud C."/>
            <person name="Giraud T."/>
            <person name="Gonzalez C."/>
            <person name="Grossetete S."/>
            <person name="Gueldener U."/>
            <person name="Henrissat B."/>
            <person name="Howlett B.J."/>
            <person name="Kodira C."/>
            <person name="Kretschmer M."/>
            <person name="Lappartient A."/>
            <person name="Leroch M."/>
            <person name="Levis C."/>
            <person name="Mauceli E."/>
            <person name="Neuveglise C."/>
            <person name="Oeser B."/>
            <person name="Pearson M."/>
            <person name="Poulain J."/>
            <person name="Poussereau N."/>
            <person name="Quesneville H."/>
            <person name="Rascle C."/>
            <person name="Schumacher J."/>
            <person name="Segurens B."/>
            <person name="Sexton A."/>
            <person name="Silva E."/>
            <person name="Sirven C."/>
            <person name="Soanes D.M."/>
            <person name="Talbot N.J."/>
            <person name="Templeton M."/>
            <person name="Yandava C."/>
            <person name="Yarden O."/>
            <person name="Zeng Q."/>
            <person name="Rollins J.A."/>
            <person name="Lebrun M.-H."/>
            <person name="Dickman M."/>
        </authorList>
    </citation>
    <scope>NUCLEOTIDE SEQUENCE [LARGE SCALE GENOMIC DNA]</scope>
    <source>
        <strain>ATCC 18683 / 1980 / Ss-1</strain>
    </source>
</reference>
<dbReference type="EMBL" id="CH476639">
    <property type="protein sequence ID" value="EDN96008.1"/>
    <property type="molecule type" value="Genomic_DNA"/>
</dbReference>
<dbReference type="RefSeq" id="XP_001587184.1">
    <property type="nucleotide sequence ID" value="XM_001587134.1"/>
</dbReference>
<dbReference type="SMR" id="A7F2R6"/>
<dbReference type="FunCoup" id="A7F2R6">
    <property type="interactions" value="1480"/>
</dbReference>
<dbReference type="STRING" id="665079.A7F2R6"/>
<dbReference type="EnsemblFungi" id="EDN96008">
    <property type="protein sequence ID" value="EDN96008"/>
    <property type="gene ID" value="SS1G_12214"/>
</dbReference>
<dbReference type="GeneID" id="5483263"/>
<dbReference type="KEGG" id="ssl:SS1G_12214"/>
<dbReference type="VEuPathDB" id="FungiDB:sscle_05g041850"/>
<dbReference type="eggNOG" id="KOG2572">
    <property type="taxonomic scope" value="Eukaryota"/>
</dbReference>
<dbReference type="HOGENOM" id="CLU_015495_5_0_1"/>
<dbReference type="InParanoid" id="A7F2R6"/>
<dbReference type="OMA" id="MGMRSNW"/>
<dbReference type="OrthoDB" id="6780543at2759"/>
<dbReference type="Proteomes" id="UP000001312">
    <property type="component" value="Unassembled WGS sequence"/>
</dbReference>
<dbReference type="GO" id="GO:0031428">
    <property type="term" value="C:box C/D methylation guide snoRNP complex"/>
    <property type="evidence" value="ECO:0000318"/>
    <property type="project" value="GO_Central"/>
</dbReference>
<dbReference type="GO" id="GO:0005730">
    <property type="term" value="C:nucleolus"/>
    <property type="evidence" value="ECO:0007669"/>
    <property type="project" value="UniProtKB-SubCell"/>
</dbReference>
<dbReference type="GO" id="GO:0032040">
    <property type="term" value="C:small-subunit processome"/>
    <property type="evidence" value="ECO:0000318"/>
    <property type="project" value="GO_Central"/>
</dbReference>
<dbReference type="GO" id="GO:0030515">
    <property type="term" value="F:snoRNA binding"/>
    <property type="evidence" value="ECO:0000318"/>
    <property type="project" value="GO_Central"/>
</dbReference>
<dbReference type="GO" id="GO:0017069">
    <property type="term" value="F:snRNA binding"/>
    <property type="evidence" value="ECO:0007669"/>
    <property type="project" value="EnsemblFungi"/>
</dbReference>
<dbReference type="GO" id="GO:0000494">
    <property type="term" value="P:box C/D sno(s)RNA 3'-end processing"/>
    <property type="evidence" value="ECO:0007669"/>
    <property type="project" value="EnsemblFungi"/>
</dbReference>
<dbReference type="GO" id="GO:0000480">
    <property type="term" value="P:endonucleolytic cleavage in 5'-ETS of tricistronic rRNA transcript (SSU-rRNA, 5.8S rRNA, LSU-rRNA)"/>
    <property type="evidence" value="ECO:0007669"/>
    <property type="project" value="EnsemblFungi"/>
</dbReference>
<dbReference type="GO" id="GO:0000447">
    <property type="term" value="P:endonucleolytic cleavage in ITS1 to separate SSU-rRNA from 5.8S rRNA and LSU-rRNA from tricistronic rRNA transcript (SSU-rRNA, 5.8S rRNA, LSU-rRNA)"/>
    <property type="evidence" value="ECO:0007669"/>
    <property type="project" value="EnsemblFungi"/>
</dbReference>
<dbReference type="GO" id="GO:0000472">
    <property type="term" value="P:endonucleolytic cleavage to generate mature 5'-end of SSU-rRNA from (SSU-rRNA, 5.8S rRNA, LSU-rRNA)"/>
    <property type="evidence" value="ECO:0007669"/>
    <property type="project" value="EnsemblFungi"/>
</dbReference>
<dbReference type="GO" id="GO:1902570">
    <property type="term" value="P:protein localization to nucleolus"/>
    <property type="evidence" value="ECO:0007669"/>
    <property type="project" value="EnsemblFungi"/>
</dbReference>
<dbReference type="GO" id="GO:0000452">
    <property type="term" value="P:snoRNA guided rRNA 2'-O-methylation"/>
    <property type="evidence" value="ECO:0007669"/>
    <property type="project" value="EnsemblFungi"/>
</dbReference>
<dbReference type="FunFam" id="1.10.246.90:FF:000003">
    <property type="entry name" value="Nucleolar protein 58"/>
    <property type="match status" value="1"/>
</dbReference>
<dbReference type="FunFam" id="1.10.287.4070:FF:000001">
    <property type="entry name" value="Probable Nucleolar protein 58"/>
    <property type="match status" value="1"/>
</dbReference>
<dbReference type="Gene3D" id="1.10.287.4070">
    <property type="match status" value="1"/>
</dbReference>
<dbReference type="Gene3D" id="1.10.246.90">
    <property type="entry name" value="Nop domain"/>
    <property type="match status" value="1"/>
</dbReference>
<dbReference type="InterPro" id="IPR045056">
    <property type="entry name" value="Nop56/Nop58"/>
</dbReference>
<dbReference type="InterPro" id="IPR012974">
    <property type="entry name" value="NOP58/56_N"/>
</dbReference>
<dbReference type="InterPro" id="IPR042239">
    <property type="entry name" value="Nop_C"/>
</dbReference>
<dbReference type="InterPro" id="IPR002687">
    <property type="entry name" value="Nop_dom"/>
</dbReference>
<dbReference type="InterPro" id="IPR036070">
    <property type="entry name" value="Nop_dom_sf"/>
</dbReference>
<dbReference type="InterPro" id="IPR012976">
    <property type="entry name" value="NOSIC"/>
</dbReference>
<dbReference type="PANTHER" id="PTHR10894">
    <property type="entry name" value="NUCLEOLAR PROTEIN 5 NUCLEOLAR PROTEIN NOP5 NOP58"/>
    <property type="match status" value="1"/>
</dbReference>
<dbReference type="PANTHER" id="PTHR10894:SF1">
    <property type="entry name" value="NUCLEOLAR PROTEIN 58"/>
    <property type="match status" value="1"/>
</dbReference>
<dbReference type="Pfam" id="PF01798">
    <property type="entry name" value="Nop"/>
    <property type="match status" value="1"/>
</dbReference>
<dbReference type="Pfam" id="PF08156">
    <property type="entry name" value="NOP5NT"/>
    <property type="match status" value="1"/>
</dbReference>
<dbReference type="SMART" id="SM00931">
    <property type="entry name" value="NOSIC"/>
    <property type="match status" value="1"/>
</dbReference>
<dbReference type="SUPFAM" id="SSF89124">
    <property type="entry name" value="Nop domain"/>
    <property type="match status" value="1"/>
</dbReference>
<dbReference type="PROSITE" id="PS51358">
    <property type="entry name" value="NOP"/>
    <property type="match status" value="1"/>
</dbReference>
<name>NOP58_SCLS1</name>